<organism>
    <name type="scientific">Shewanella halifaxensis (strain HAW-EB4)</name>
    <dbReference type="NCBI Taxonomy" id="458817"/>
    <lineage>
        <taxon>Bacteria</taxon>
        <taxon>Pseudomonadati</taxon>
        <taxon>Pseudomonadota</taxon>
        <taxon>Gammaproteobacteria</taxon>
        <taxon>Alteromonadales</taxon>
        <taxon>Shewanellaceae</taxon>
        <taxon>Shewanella</taxon>
    </lineage>
</organism>
<gene>
    <name evidence="1" type="primary">pgk</name>
    <name type="ordered locus">Shal_0846</name>
</gene>
<dbReference type="EC" id="2.7.2.3" evidence="1"/>
<dbReference type="EMBL" id="CP000931">
    <property type="protein sequence ID" value="ABZ75421.1"/>
    <property type="molecule type" value="Genomic_DNA"/>
</dbReference>
<dbReference type="RefSeq" id="WP_012275973.1">
    <property type="nucleotide sequence ID" value="NC_010334.1"/>
</dbReference>
<dbReference type="SMR" id="B0TUC1"/>
<dbReference type="STRING" id="458817.Shal_0846"/>
<dbReference type="KEGG" id="shl:Shal_0846"/>
<dbReference type="eggNOG" id="COG0126">
    <property type="taxonomic scope" value="Bacteria"/>
</dbReference>
<dbReference type="HOGENOM" id="CLU_025427_0_2_6"/>
<dbReference type="OrthoDB" id="9808460at2"/>
<dbReference type="UniPathway" id="UPA00109">
    <property type="reaction ID" value="UER00185"/>
</dbReference>
<dbReference type="Proteomes" id="UP000001317">
    <property type="component" value="Chromosome"/>
</dbReference>
<dbReference type="GO" id="GO:0005829">
    <property type="term" value="C:cytosol"/>
    <property type="evidence" value="ECO:0007669"/>
    <property type="project" value="TreeGrafter"/>
</dbReference>
<dbReference type="GO" id="GO:0043531">
    <property type="term" value="F:ADP binding"/>
    <property type="evidence" value="ECO:0007669"/>
    <property type="project" value="TreeGrafter"/>
</dbReference>
<dbReference type="GO" id="GO:0005524">
    <property type="term" value="F:ATP binding"/>
    <property type="evidence" value="ECO:0007669"/>
    <property type="project" value="UniProtKB-KW"/>
</dbReference>
<dbReference type="GO" id="GO:0004618">
    <property type="term" value="F:phosphoglycerate kinase activity"/>
    <property type="evidence" value="ECO:0007669"/>
    <property type="project" value="UniProtKB-UniRule"/>
</dbReference>
<dbReference type="GO" id="GO:0006094">
    <property type="term" value="P:gluconeogenesis"/>
    <property type="evidence" value="ECO:0007669"/>
    <property type="project" value="TreeGrafter"/>
</dbReference>
<dbReference type="GO" id="GO:0006096">
    <property type="term" value="P:glycolytic process"/>
    <property type="evidence" value="ECO:0007669"/>
    <property type="project" value="UniProtKB-UniRule"/>
</dbReference>
<dbReference type="FunFam" id="3.40.50.1260:FF:000001">
    <property type="entry name" value="Phosphoglycerate kinase"/>
    <property type="match status" value="1"/>
</dbReference>
<dbReference type="FunFam" id="3.40.50.1260:FF:000002">
    <property type="entry name" value="Phosphoglycerate kinase"/>
    <property type="match status" value="1"/>
</dbReference>
<dbReference type="Gene3D" id="3.40.50.1260">
    <property type="entry name" value="Phosphoglycerate kinase, N-terminal domain"/>
    <property type="match status" value="2"/>
</dbReference>
<dbReference type="HAMAP" id="MF_00145">
    <property type="entry name" value="Phosphoglyc_kinase"/>
    <property type="match status" value="1"/>
</dbReference>
<dbReference type="InterPro" id="IPR001576">
    <property type="entry name" value="Phosphoglycerate_kinase"/>
</dbReference>
<dbReference type="InterPro" id="IPR015911">
    <property type="entry name" value="Phosphoglycerate_kinase_CS"/>
</dbReference>
<dbReference type="InterPro" id="IPR015824">
    <property type="entry name" value="Phosphoglycerate_kinase_N"/>
</dbReference>
<dbReference type="InterPro" id="IPR036043">
    <property type="entry name" value="Phosphoglycerate_kinase_sf"/>
</dbReference>
<dbReference type="PANTHER" id="PTHR11406">
    <property type="entry name" value="PHOSPHOGLYCERATE KINASE"/>
    <property type="match status" value="1"/>
</dbReference>
<dbReference type="PANTHER" id="PTHR11406:SF23">
    <property type="entry name" value="PHOSPHOGLYCERATE KINASE 1, CHLOROPLASTIC-RELATED"/>
    <property type="match status" value="1"/>
</dbReference>
<dbReference type="Pfam" id="PF00162">
    <property type="entry name" value="PGK"/>
    <property type="match status" value="1"/>
</dbReference>
<dbReference type="PIRSF" id="PIRSF000724">
    <property type="entry name" value="Pgk"/>
    <property type="match status" value="1"/>
</dbReference>
<dbReference type="PRINTS" id="PR00477">
    <property type="entry name" value="PHGLYCKINASE"/>
</dbReference>
<dbReference type="SUPFAM" id="SSF53748">
    <property type="entry name" value="Phosphoglycerate kinase"/>
    <property type="match status" value="1"/>
</dbReference>
<dbReference type="PROSITE" id="PS00111">
    <property type="entry name" value="PGLYCERATE_KINASE"/>
    <property type="match status" value="1"/>
</dbReference>
<proteinExistence type="inferred from homology"/>
<evidence type="ECO:0000255" key="1">
    <source>
        <dbReference type="HAMAP-Rule" id="MF_00145"/>
    </source>
</evidence>
<keyword id="KW-0067">ATP-binding</keyword>
<keyword id="KW-0963">Cytoplasm</keyword>
<keyword id="KW-0324">Glycolysis</keyword>
<keyword id="KW-0418">Kinase</keyword>
<keyword id="KW-0547">Nucleotide-binding</keyword>
<keyword id="KW-0808">Transferase</keyword>
<protein>
    <recommendedName>
        <fullName evidence="1">Phosphoglycerate kinase</fullName>
        <ecNumber evidence="1">2.7.2.3</ecNumber>
    </recommendedName>
</protein>
<comment type="catalytic activity">
    <reaction evidence="1">
        <text>(2R)-3-phosphoglycerate + ATP = (2R)-3-phospho-glyceroyl phosphate + ADP</text>
        <dbReference type="Rhea" id="RHEA:14801"/>
        <dbReference type="ChEBI" id="CHEBI:30616"/>
        <dbReference type="ChEBI" id="CHEBI:57604"/>
        <dbReference type="ChEBI" id="CHEBI:58272"/>
        <dbReference type="ChEBI" id="CHEBI:456216"/>
        <dbReference type="EC" id="2.7.2.3"/>
    </reaction>
</comment>
<comment type="pathway">
    <text evidence="1">Carbohydrate degradation; glycolysis; pyruvate from D-glyceraldehyde 3-phosphate: step 2/5.</text>
</comment>
<comment type="subunit">
    <text evidence="1">Monomer.</text>
</comment>
<comment type="subcellular location">
    <subcellularLocation>
        <location evidence="1">Cytoplasm</location>
    </subcellularLocation>
</comment>
<comment type="similarity">
    <text evidence="1">Belongs to the phosphoglycerate kinase family.</text>
</comment>
<name>PGK_SHEHH</name>
<reference key="1">
    <citation type="submission" date="2008-01" db="EMBL/GenBank/DDBJ databases">
        <title>Complete sequence of Shewanella halifaxensis HAW-EB4.</title>
        <authorList>
            <consortium name="US DOE Joint Genome Institute"/>
            <person name="Copeland A."/>
            <person name="Lucas S."/>
            <person name="Lapidus A."/>
            <person name="Glavina del Rio T."/>
            <person name="Dalin E."/>
            <person name="Tice H."/>
            <person name="Bruce D."/>
            <person name="Goodwin L."/>
            <person name="Pitluck S."/>
            <person name="Sims D."/>
            <person name="Brettin T."/>
            <person name="Detter J.C."/>
            <person name="Han C."/>
            <person name="Kuske C.R."/>
            <person name="Schmutz J."/>
            <person name="Larimer F."/>
            <person name="Land M."/>
            <person name="Hauser L."/>
            <person name="Kyrpides N."/>
            <person name="Kim E."/>
            <person name="Zhao J.-S."/>
            <person name="Richardson P."/>
        </authorList>
    </citation>
    <scope>NUCLEOTIDE SEQUENCE [LARGE SCALE GENOMIC DNA]</scope>
    <source>
        <strain>HAW-EB4</strain>
    </source>
</reference>
<feature type="chain" id="PRO_1000076607" description="Phosphoglycerate kinase">
    <location>
        <begin position="1"/>
        <end position="391"/>
    </location>
</feature>
<feature type="binding site" evidence="1">
    <location>
        <begin position="21"/>
        <end position="23"/>
    </location>
    <ligand>
        <name>substrate</name>
    </ligand>
</feature>
<feature type="binding site" evidence="1">
    <location>
        <position position="36"/>
    </location>
    <ligand>
        <name>substrate</name>
    </ligand>
</feature>
<feature type="binding site" evidence="1">
    <location>
        <begin position="59"/>
        <end position="62"/>
    </location>
    <ligand>
        <name>substrate</name>
    </ligand>
</feature>
<feature type="binding site" evidence="1">
    <location>
        <position position="113"/>
    </location>
    <ligand>
        <name>substrate</name>
    </ligand>
</feature>
<feature type="binding site" evidence="1">
    <location>
        <position position="146"/>
    </location>
    <ligand>
        <name>substrate</name>
    </ligand>
</feature>
<feature type="binding site" evidence="1">
    <location>
        <position position="197"/>
    </location>
    <ligand>
        <name>ATP</name>
        <dbReference type="ChEBI" id="CHEBI:30616"/>
    </ligand>
</feature>
<feature type="binding site" evidence="1">
    <location>
        <position position="319"/>
    </location>
    <ligand>
        <name>ATP</name>
        <dbReference type="ChEBI" id="CHEBI:30616"/>
    </ligand>
</feature>
<feature type="binding site" evidence="1">
    <location>
        <begin position="345"/>
        <end position="348"/>
    </location>
    <ligand>
        <name>ATP</name>
        <dbReference type="ChEBI" id="CHEBI:30616"/>
    </ligand>
</feature>
<accession>B0TUC1</accession>
<sequence>MAILNMQDLELQGKRVLIREDLNVPVKDGVVTSDARLRASLPTIKLALEKGAAVMVMSHLGRPTEGEFNAEFSMQPVVDYLTKALDCPVSLATEYLDGVEVAVGEVVVFENVRFNVGEKKNDEALAKKMAALCDVYVMDAFGTAHRAQASTHGVGLHAPIACAGPLLAGELAALGKALDNPARPMVAIVGGSKVSTKLTVLESLSTKVDQLVVGGGIANTFVAAAGHQVGKSLYEADLIEEAKRLVANAQSRGGDIPVPTDVVVASEFSPTATATLKDVSTVSDTDMIFDIGPDSAEALAEIIKNAGTVVWNGPVGVFEFDQFGEGTKRIAQAIAESNAFSIAGGGDTLAAVDKYGIADKVSYISTGGGAFLEFLEGKELPAVAMLESRGQ</sequence>